<feature type="chain" id="PRO_0000401998" description="Methylthioribose-1-phosphate isomerase">
    <location>
        <begin position="1"/>
        <end position="367"/>
    </location>
</feature>
<feature type="active site" description="Proton donor" evidence="1">
    <location>
        <position position="250"/>
    </location>
</feature>
<feature type="site" description="Transition state stabilizer" evidence="1">
    <location>
        <position position="170"/>
    </location>
</feature>
<feature type="sequence conflict" description="In Ref. 2; ACG37871." evidence="2" ref="2">
    <original>AA</original>
    <variation>VG</variation>
    <location>
        <begin position="2"/>
        <end position="3"/>
    </location>
</feature>
<feature type="sequence conflict" description="In Ref. 1; AAU86895 and 2; ACG37871." evidence="2" ref="1 2">
    <original>F</original>
    <variation>V</variation>
    <location>
        <position position="278"/>
    </location>
</feature>
<feature type="sequence conflict" description="In Ref. 1; AAU86895 and 2; ACG37871." evidence="2" ref="1 2">
    <original>S</original>
    <variation>A</variation>
    <location>
        <position position="281"/>
    </location>
</feature>
<name>MTNA_MAIZE</name>
<dbReference type="EC" id="5.3.1.23" evidence="1"/>
<dbReference type="EMBL" id="AY738148">
    <property type="protein sequence ID" value="AAU86895.1"/>
    <property type="molecule type" value="mRNA"/>
</dbReference>
<dbReference type="EMBL" id="EU965753">
    <property type="protein sequence ID" value="ACG37871.1"/>
    <property type="molecule type" value="mRNA"/>
</dbReference>
<dbReference type="EMBL" id="EU970346">
    <property type="protein sequence ID" value="ACG42464.1"/>
    <property type="molecule type" value="mRNA"/>
</dbReference>
<dbReference type="EMBL" id="BT055692">
    <property type="protein sequence ID" value="ACL54299.1"/>
    <property type="status" value="ALT_FRAME"/>
    <property type="molecule type" value="mRNA"/>
</dbReference>
<dbReference type="RefSeq" id="NP_001105275.2">
    <property type="nucleotide sequence ID" value="NM_001111805.2"/>
</dbReference>
<dbReference type="SMR" id="B6TZD1"/>
<dbReference type="FunCoup" id="B6TZD1">
    <property type="interactions" value="3392"/>
</dbReference>
<dbReference type="STRING" id="4577.B6TZD1"/>
<dbReference type="PaxDb" id="4577-GRMZM2G139533_P01"/>
<dbReference type="EnsemblPlants" id="Zm00001eb168430_T001">
    <property type="protein sequence ID" value="Zm00001eb168430_P001"/>
    <property type="gene ID" value="Zm00001eb168430"/>
</dbReference>
<dbReference type="GeneID" id="542191"/>
<dbReference type="Gramene" id="Zm00001eb168430_T001">
    <property type="protein sequence ID" value="Zm00001eb168430_P001"/>
    <property type="gene ID" value="Zm00001eb168430"/>
</dbReference>
<dbReference type="KEGG" id="zma:542191"/>
<dbReference type="eggNOG" id="KOG1468">
    <property type="taxonomic scope" value="Eukaryota"/>
</dbReference>
<dbReference type="HOGENOM" id="CLU_016218_1_3_1"/>
<dbReference type="InParanoid" id="B6TZD1"/>
<dbReference type="OMA" id="CETRPLN"/>
<dbReference type="OrthoDB" id="2461at2759"/>
<dbReference type="UniPathway" id="UPA00904">
    <property type="reaction ID" value="UER00874"/>
</dbReference>
<dbReference type="Proteomes" id="UP000007305">
    <property type="component" value="Chromosome 4"/>
</dbReference>
<dbReference type="ExpressionAtlas" id="B6TZD1">
    <property type="expression patterns" value="baseline and differential"/>
</dbReference>
<dbReference type="GO" id="GO:0005737">
    <property type="term" value="C:cytoplasm"/>
    <property type="evidence" value="ECO:0007669"/>
    <property type="project" value="UniProtKB-SubCell"/>
</dbReference>
<dbReference type="GO" id="GO:0005634">
    <property type="term" value="C:nucleus"/>
    <property type="evidence" value="ECO:0007669"/>
    <property type="project" value="UniProtKB-SubCell"/>
</dbReference>
<dbReference type="GO" id="GO:0046523">
    <property type="term" value="F:S-methyl-5-thioribose-1-phosphate isomerase activity"/>
    <property type="evidence" value="ECO:0000318"/>
    <property type="project" value="GO_Central"/>
</dbReference>
<dbReference type="GO" id="GO:0019509">
    <property type="term" value="P:L-methionine salvage from methylthioadenosine"/>
    <property type="evidence" value="ECO:0000318"/>
    <property type="project" value="GO_Central"/>
</dbReference>
<dbReference type="FunFam" id="1.20.120.420:FF:000002">
    <property type="entry name" value="Methylthioribose-1-phosphate isomerase"/>
    <property type="match status" value="1"/>
</dbReference>
<dbReference type="FunFam" id="3.40.50.10470:FF:000003">
    <property type="entry name" value="Methylthioribose-1-phosphate isomerase"/>
    <property type="match status" value="1"/>
</dbReference>
<dbReference type="Gene3D" id="1.20.120.420">
    <property type="entry name" value="translation initiation factor eif-2b, domain 1"/>
    <property type="match status" value="1"/>
</dbReference>
<dbReference type="Gene3D" id="3.40.50.10470">
    <property type="entry name" value="Translation initiation factor eif-2b, domain 2"/>
    <property type="match status" value="1"/>
</dbReference>
<dbReference type="HAMAP" id="MF_01678">
    <property type="entry name" value="Salvage_MtnA"/>
    <property type="match status" value="1"/>
</dbReference>
<dbReference type="InterPro" id="IPR000649">
    <property type="entry name" value="IF-2B-related"/>
</dbReference>
<dbReference type="InterPro" id="IPR005251">
    <property type="entry name" value="IF-M1Pi"/>
</dbReference>
<dbReference type="InterPro" id="IPR042529">
    <property type="entry name" value="IF_2B-like_C"/>
</dbReference>
<dbReference type="InterPro" id="IPR011559">
    <property type="entry name" value="Initiation_fac_2B_a/b/d"/>
</dbReference>
<dbReference type="InterPro" id="IPR027363">
    <property type="entry name" value="M1Pi_N"/>
</dbReference>
<dbReference type="InterPro" id="IPR037171">
    <property type="entry name" value="NagB/RpiA_transferase-like"/>
</dbReference>
<dbReference type="NCBIfam" id="TIGR00524">
    <property type="entry name" value="eIF-2B_rel"/>
    <property type="match status" value="1"/>
</dbReference>
<dbReference type="NCBIfam" id="NF004326">
    <property type="entry name" value="PRK05720.1"/>
    <property type="match status" value="1"/>
</dbReference>
<dbReference type="NCBIfam" id="TIGR00512">
    <property type="entry name" value="salvage_mtnA"/>
    <property type="match status" value="1"/>
</dbReference>
<dbReference type="PANTHER" id="PTHR43475">
    <property type="entry name" value="METHYLTHIORIBOSE-1-PHOSPHATE ISOMERASE"/>
    <property type="match status" value="1"/>
</dbReference>
<dbReference type="PANTHER" id="PTHR43475:SF1">
    <property type="entry name" value="METHYLTHIORIBOSE-1-PHOSPHATE ISOMERASE"/>
    <property type="match status" value="1"/>
</dbReference>
<dbReference type="Pfam" id="PF01008">
    <property type="entry name" value="IF-2B"/>
    <property type="match status" value="1"/>
</dbReference>
<dbReference type="SUPFAM" id="SSF100950">
    <property type="entry name" value="NagB/RpiA/CoA transferase-like"/>
    <property type="match status" value="1"/>
</dbReference>
<sequence length="367" mass="38622">MAASDALQSIVYSRGSLRLLDQRKLPLEMEYIDVKSSADGWNAIRDMVVRGAPAIAIAAALALAVEVSDLDFIGTPEEAASFVSKKLEYLVSSRPTAVNLSDAATKLQTLVSKAAETAKDSKSIFQVYIEAAETMLVDDVADNKAIGSHGAVFLQRQLANSKKISVLTHCNTGSLATAGYGTALGVIRALHSGGVLEKAFCTETRPFNQGSRLTAFELVHEKIPATLIADSAAAALMKQGHVQAVIVGADRIAANGDTANKIGTYNLAISAKHHSVQFYVSAPVTSIDLSLPSGDEIVIEERSPKELLNSEGGLGKQVAASGISVWNPAFDVTPANLITAIITEKGVITKTDADGSFDIKGFLLPAK</sequence>
<reference key="1">
    <citation type="submission" date="2004-08" db="EMBL/GenBank/DDBJ databases">
        <title>Zea mays isopentenyl-diphosphate delta isomerase 2 mRNA.</title>
        <authorList>
            <person name="Holtgraewe D.L."/>
            <person name="Heuer S."/>
            <person name="Scheibe R."/>
        </authorList>
    </citation>
    <scope>NUCLEOTIDE SEQUENCE [MRNA]</scope>
    <source>
        <tissue>Root</tissue>
    </source>
</reference>
<reference key="2">
    <citation type="journal article" date="2009" name="Plant Mol. Biol.">
        <title>Insights into corn genes derived from large-scale cDNA sequencing.</title>
        <authorList>
            <person name="Alexandrov N.N."/>
            <person name="Brover V.V."/>
            <person name="Freidin S."/>
            <person name="Troukhan M.E."/>
            <person name="Tatarinova T.V."/>
            <person name="Zhang H."/>
            <person name="Swaller T.J."/>
            <person name="Lu Y.-P."/>
            <person name="Bouck J."/>
            <person name="Flavell R.B."/>
            <person name="Feldmann K.A."/>
        </authorList>
    </citation>
    <scope>NUCLEOTIDE SEQUENCE [LARGE SCALE MRNA]</scope>
</reference>
<reference key="3">
    <citation type="journal article" date="2009" name="PLoS Genet.">
        <title>Sequencing, mapping, and analysis of 27,455 maize full-length cDNAs.</title>
        <authorList>
            <person name="Soderlund C."/>
            <person name="Descour A."/>
            <person name="Kudrna D."/>
            <person name="Bomhoff M."/>
            <person name="Boyd L."/>
            <person name="Currie J."/>
            <person name="Angelova A."/>
            <person name="Collura K."/>
            <person name="Wissotski M."/>
            <person name="Ashley E."/>
            <person name="Morrow D."/>
            <person name="Fernandes J."/>
            <person name="Walbot V."/>
            <person name="Yu Y."/>
        </authorList>
    </citation>
    <scope>NUCLEOTIDE SEQUENCE [LARGE SCALE MRNA]</scope>
    <source>
        <strain>cv. B73</strain>
    </source>
</reference>
<keyword id="KW-0028">Amino-acid biosynthesis</keyword>
<keyword id="KW-0963">Cytoplasm</keyword>
<keyword id="KW-0413">Isomerase</keyword>
<keyword id="KW-0486">Methionine biosynthesis</keyword>
<keyword id="KW-0539">Nucleus</keyword>
<keyword id="KW-1185">Reference proteome</keyword>
<evidence type="ECO:0000255" key="1">
    <source>
        <dbReference type="HAMAP-Rule" id="MF_03119"/>
    </source>
</evidence>
<evidence type="ECO:0000305" key="2"/>
<proteinExistence type="evidence at transcript level"/>
<accession>B6TZD1</accession>
<accession>B6TL88</accession>
<accession>B8A2A0</accession>
<accession>Q5XTZ5</accession>
<gene>
    <name type="primary">IDI2</name>
</gene>
<protein>
    <recommendedName>
        <fullName evidence="1">Methylthioribose-1-phosphate isomerase</fullName>
        <shortName evidence="1">M1Pi</shortName>
        <shortName evidence="1">MTR-1-P isomerase</shortName>
        <ecNumber evidence="1">5.3.1.23</ecNumber>
    </recommendedName>
    <alternativeName>
        <fullName>Protein IRON DEFICIENCY INDUCIBLE 2</fullName>
        <shortName>ZmIDI2</shortName>
    </alternativeName>
    <alternativeName>
        <fullName evidence="1">S-methyl-5-thioribose-1-phosphate isomerase</fullName>
    </alternativeName>
    <alternativeName>
        <fullName evidence="1">Translation initiation factor eIF-2B subunit alpha/beta/delta-like protein</fullName>
    </alternativeName>
</protein>
<organism>
    <name type="scientific">Zea mays</name>
    <name type="common">Maize</name>
    <dbReference type="NCBI Taxonomy" id="4577"/>
    <lineage>
        <taxon>Eukaryota</taxon>
        <taxon>Viridiplantae</taxon>
        <taxon>Streptophyta</taxon>
        <taxon>Embryophyta</taxon>
        <taxon>Tracheophyta</taxon>
        <taxon>Spermatophyta</taxon>
        <taxon>Magnoliopsida</taxon>
        <taxon>Liliopsida</taxon>
        <taxon>Poales</taxon>
        <taxon>Poaceae</taxon>
        <taxon>PACMAD clade</taxon>
        <taxon>Panicoideae</taxon>
        <taxon>Andropogonodae</taxon>
        <taxon>Andropogoneae</taxon>
        <taxon>Tripsacinae</taxon>
        <taxon>Zea</taxon>
    </lineage>
</organism>
<comment type="function">
    <text evidence="1">Catalyzes the interconversion of methylthioribose-1-phosphate (MTR-1-P) into methylthioribulose-1-phosphate (MTRu-1-P).</text>
</comment>
<comment type="catalytic activity">
    <reaction evidence="1">
        <text>5-(methylsulfanyl)-alpha-D-ribose 1-phosphate = 5-(methylsulfanyl)-D-ribulose 1-phosphate</text>
        <dbReference type="Rhea" id="RHEA:19989"/>
        <dbReference type="ChEBI" id="CHEBI:58533"/>
        <dbReference type="ChEBI" id="CHEBI:58548"/>
        <dbReference type="EC" id="5.3.1.23"/>
    </reaction>
</comment>
<comment type="pathway">
    <text evidence="1">Amino-acid biosynthesis; L-methionine biosynthesis via salvage pathway; L-methionine from S-methyl-5-thio-alpha-D-ribose 1-phosphate: step 1/6.</text>
</comment>
<comment type="subcellular location">
    <subcellularLocation>
        <location evidence="1">Cytoplasm</location>
    </subcellularLocation>
    <subcellularLocation>
        <location evidence="1">Nucleus</location>
    </subcellularLocation>
</comment>
<comment type="similarity">
    <text evidence="1">Belongs to the eIF-2B alpha/beta/delta subunits family. MtnA subfamily.</text>
</comment>
<comment type="sequence caution" evidence="2">
    <conflict type="frameshift">
        <sequence resource="EMBL-CDS" id="ACL54299"/>
    </conflict>
</comment>